<sequence>MKFIIKLFPEITIKSQSVRLRFIKILTGNIRNVLKHYDETLAVVRHWDNIEVRAKDEKQRLAIRDALTRIPGIHHILEVEDVPFTDMHDIFEKALVQYRDQLEGKTFCVRVKRRGKHDFSSIDVERYVGGGLNQHIESARVKLTNPDVTVHLEVEDDRLLLIKGRYEGIGGFPIGTQEDVLSLISGGFDSGVSSYMLMRRGCRVHYCFFNLGGAAHEIGVRQVAHYLWNRFGSSHRVRFVAINFEPVVGEILEKIDDGQMGVILKRMMVRAASKVAERYGVQALVTGEALGQVSSQTLTNLRLIDNVSDTLILRPLISYDKEHIINLARQIGTEDFARTMPEYCGVISKSPTVKAVKSKIEAEEEKFDFSILDKVVEEANNVDIREIAQQTEQEVVEVETVNGFGPNDVILDIRSVDEQEDKPLKVEGIDVVSLPFYKLSTKFGDLDQNRTWLLWCERGVMSRLQALYLREQGFNNVKVYRP</sequence>
<proteinExistence type="inferred from homology"/>
<organism>
    <name type="scientific">Shigella sonnei (strain Ss046)</name>
    <dbReference type="NCBI Taxonomy" id="300269"/>
    <lineage>
        <taxon>Bacteria</taxon>
        <taxon>Pseudomonadati</taxon>
        <taxon>Pseudomonadota</taxon>
        <taxon>Gammaproteobacteria</taxon>
        <taxon>Enterobacterales</taxon>
        <taxon>Enterobacteriaceae</taxon>
        <taxon>Shigella</taxon>
    </lineage>
</organism>
<accession>Q3Z4Y6</accession>
<feature type="chain" id="PRO_1000074280" description="tRNA sulfurtransferase">
    <location>
        <begin position="1"/>
        <end position="482"/>
    </location>
</feature>
<feature type="domain" description="THUMP" evidence="1">
    <location>
        <begin position="61"/>
        <end position="165"/>
    </location>
</feature>
<feature type="domain" description="Rhodanese" evidence="1">
    <location>
        <begin position="404"/>
        <end position="482"/>
    </location>
</feature>
<feature type="active site" description="Cysteine persulfide intermediate" evidence="1">
    <location>
        <position position="456"/>
    </location>
</feature>
<feature type="binding site" evidence="1">
    <location>
        <begin position="183"/>
        <end position="184"/>
    </location>
    <ligand>
        <name>ATP</name>
        <dbReference type="ChEBI" id="CHEBI:30616"/>
    </ligand>
</feature>
<feature type="binding site" evidence="1">
    <location>
        <position position="265"/>
    </location>
    <ligand>
        <name>ATP</name>
        <dbReference type="ChEBI" id="CHEBI:30616"/>
    </ligand>
</feature>
<feature type="binding site" evidence="1">
    <location>
        <position position="287"/>
    </location>
    <ligand>
        <name>ATP</name>
        <dbReference type="ChEBI" id="CHEBI:30616"/>
    </ligand>
</feature>
<feature type="binding site" evidence="1">
    <location>
        <position position="296"/>
    </location>
    <ligand>
        <name>ATP</name>
        <dbReference type="ChEBI" id="CHEBI:30616"/>
    </ligand>
</feature>
<feature type="disulfide bond" description="Redox-active" evidence="1">
    <location>
        <begin position="344"/>
        <end position="456"/>
    </location>
</feature>
<dbReference type="EC" id="2.8.1.4" evidence="1"/>
<dbReference type="EMBL" id="CP000038">
    <property type="protein sequence ID" value="AAZ87176.1"/>
    <property type="molecule type" value="Genomic_DNA"/>
</dbReference>
<dbReference type="RefSeq" id="WP_000668643.1">
    <property type="nucleotide sequence ID" value="NC_007384.1"/>
</dbReference>
<dbReference type="SMR" id="Q3Z4Y6"/>
<dbReference type="GeneID" id="93777037"/>
<dbReference type="KEGG" id="ssn:SSON_0400"/>
<dbReference type="HOGENOM" id="CLU_037952_4_1_6"/>
<dbReference type="UniPathway" id="UPA00060"/>
<dbReference type="Proteomes" id="UP000002529">
    <property type="component" value="Chromosome"/>
</dbReference>
<dbReference type="GO" id="GO:0005829">
    <property type="term" value="C:cytosol"/>
    <property type="evidence" value="ECO:0007669"/>
    <property type="project" value="TreeGrafter"/>
</dbReference>
<dbReference type="GO" id="GO:0005524">
    <property type="term" value="F:ATP binding"/>
    <property type="evidence" value="ECO:0007669"/>
    <property type="project" value="UniProtKB-UniRule"/>
</dbReference>
<dbReference type="GO" id="GO:0004810">
    <property type="term" value="F:CCA tRNA nucleotidyltransferase activity"/>
    <property type="evidence" value="ECO:0007669"/>
    <property type="project" value="InterPro"/>
</dbReference>
<dbReference type="GO" id="GO:0000049">
    <property type="term" value="F:tRNA binding"/>
    <property type="evidence" value="ECO:0007669"/>
    <property type="project" value="UniProtKB-UniRule"/>
</dbReference>
<dbReference type="GO" id="GO:0140741">
    <property type="term" value="F:tRNA-uracil-4 sulfurtransferase activity"/>
    <property type="evidence" value="ECO:0007669"/>
    <property type="project" value="UniProtKB-EC"/>
</dbReference>
<dbReference type="GO" id="GO:0009228">
    <property type="term" value="P:thiamine biosynthetic process"/>
    <property type="evidence" value="ECO:0007669"/>
    <property type="project" value="UniProtKB-KW"/>
</dbReference>
<dbReference type="GO" id="GO:0009229">
    <property type="term" value="P:thiamine diphosphate biosynthetic process"/>
    <property type="evidence" value="ECO:0007669"/>
    <property type="project" value="UniProtKB-UniRule"/>
</dbReference>
<dbReference type="GO" id="GO:0052837">
    <property type="term" value="P:thiazole biosynthetic process"/>
    <property type="evidence" value="ECO:0007669"/>
    <property type="project" value="InterPro"/>
</dbReference>
<dbReference type="GO" id="GO:0002937">
    <property type="term" value="P:tRNA 4-thiouridine biosynthesis"/>
    <property type="evidence" value="ECO:0007669"/>
    <property type="project" value="TreeGrafter"/>
</dbReference>
<dbReference type="CDD" id="cd01712">
    <property type="entry name" value="PPase_ThiI"/>
    <property type="match status" value="1"/>
</dbReference>
<dbReference type="CDD" id="cd00158">
    <property type="entry name" value="RHOD"/>
    <property type="match status" value="1"/>
</dbReference>
<dbReference type="CDD" id="cd11716">
    <property type="entry name" value="THUMP_ThiI"/>
    <property type="match status" value="1"/>
</dbReference>
<dbReference type="FunFam" id="3.30.2130.30:FF:000002">
    <property type="entry name" value="tRNA sulfurtransferase"/>
    <property type="match status" value="1"/>
</dbReference>
<dbReference type="FunFam" id="3.40.250.10:FF:000003">
    <property type="entry name" value="tRNA sulfurtransferase"/>
    <property type="match status" value="1"/>
</dbReference>
<dbReference type="FunFam" id="3.40.50.620:FF:000029">
    <property type="entry name" value="tRNA sulfurtransferase"/>
    <property type="match status" value="1"/>
</dbReference>
<dbReference type="Gene3D" id="3.30.2130.30">
    <property type="match status" value="1"/>
</dbReference>
<dbReference type="Gene3D" id="3.40.50.620">
    <property type="entry name" value="HUPs"/>
    <property type="match status" value="1"/>
</dbReference>
<dbReference type="Gene3D" id="3.40.250.10">
    <property type="entry name" value="Rhodanese-like domain"/>
    <property type="match status" value="1"/>
</dbReference>
<dbReference type="HAMAP" id="MF_00021">
    <property type="entry name" value="ThiI"/>
    <property type="match status" value="1"/>
</dbReference>
<dbReference type="InterPro" id="IPR001763">
    <property type="entry name" value="Rhodanese-like_dom"/>
</dbReference>
<dbReference type="InterPro" id="IPR036873">
    <property type="entry name" value="Rhodanese-like_dom_sf"/>
</dbReference>
<dbReference type="InterPro" id="IPR014729">
    <property type="entry name" value="Rossmann-like_a/b/a_fold"/>
</dbReference>
<dbReference type="InterPro" id="IPR020536">
    <property type="entry name" value="ThiI_AANH"/>
</dbReference>
<dbReference type="InterPro" id="IPR054173">
    <property type="entry name" value="ThiI_fer"/>
</dbReference>
<dbReference type="InterPro" id="IPR049961">
    <property type="entry name" value="ThiI_N"/>
</dbReference>
<dbReference type="InterPro" id="IPR026340">
    <property type="entry name" value="THII_Thiazole_biosynth_dom"/>
</dbReference>
<dbReference type="InterPro" id="IPR004114">
    <property type="entry name" value="THUMP_dom"/>
</dbReference>
<dbReference type="InterPro" id="IPR049962">
    <property type="entry name" value="THUMP_ThiI"/>
</dbReference>
<dbReference type="InterPro" id="IPR003720">
    <property type="entry name" value="tRNA_STrfase"/>
</dbReference>
<dbReference type="InterPro" id="IPR050102">
    <property type="entry name" value="tRNA_sulfurtransferase_ThiI"/>
</dbReference>
<dbReference type="NCBIfam" id="TIGR04271">
    <property type="entry name" value="ThiI_C_thiazole"/>
    <property type="match status" value="1"/>
</dbReference>
<dbReference type="NCBIfam" id="TIGR00342">
    <property type="entry name" value="tRNA uracil 4-sulfurtransferase ThiI"/>
    <property type="match status" value="1"/>
</dbReference>
<dbReference type="PANTHER" id="PTHR43209">
    <property type="entry name" value="TRNA SULFURTRANSFERASE"/>
    <property type="match status" value="1"/>
</dbReference>
<dbReference type="PANTHER" id="PTHR43209:SF1">
    <property type="entry name" value="TRNA SULFURTRANSFERASE"/>
    <property type="match status" value="1"/>
</dbReference>
<dbReference type="Pfam" id="PF02568">
    <property type="entry name" value="ThiI"/>
    <property type="match status" value="1"/>
</dbReference>
<dbReference type="Pfam" id="PF22025">
    <property type="entry name" value="ThiI_fer"/>
    <property type="match status" value="1"/>
</dbReference>
<dbReference type="Pfam" id="PF02926">
    <property type="entry name" value="THUMP"/>
    <property type="match status" value="1"/>
</dbReference>
<dbReference type="SMART" id="SM00981">
    <property type="entry name" value="THUMP"/>
    <property type="match status" value="1"/>
</dbReference>
<dbReference type="SUPFAM" id="SSF52402">
    <property type="entry name" value="Adenine nucleotide alpha hydrolases-like"/>
    <property type="match status" value="1"/>
</dbReference>
<dbReference type="SUPFAM" id="SSF52821">
    <property type="entry name" value="Rhodanese/Cell cycle control phosphatase"/>
    <property type="match status" value="1"/>
</dbReference>
<dbReference type="SUPFAM" id="SSF143437">
    <property type="entry name" value="THUMP domain-like"/>
    <property type="match status" value="1"/>
</dbReference>
<dbReference type="PROSITE" id="PS50206">
    <property type="entry name" value="RHODANESE_3"/>
    <property type="match status" value="1"/>
</dbReference>
<dbReference type="PROSITE" id="PS51165">
    <property type="entry name" value="THUMP"/>
    <property type="match status" value="1"/>
</dbReference>
<protein>
    <recommendedName>
        <fullName evidence="1">tRNA sulfurtransferase</fullName>
        <ecNumber evidence="1">2.8.1.4</ecNumber>
    </recommendedName>
    <alternativeName>
        <fullName evidence="1">Sulfur carrier protein ThiS sulfurtransferase</fullName>
    </alternativeName>
    <alternativeName>
        <fullName evidence="1">Thiamine biosynthesis protein ThiI</fullName>
    </alternativeName>
    <alternativeName>
        <fullName evidence="1">tRNA 4-thiouridine synthase</fullName>
    </alternativeName>
</protein>
<evidence type="ECO:0000255" key="1">
    <source>
        <dbReference type="HAMAP-Rule" id="MF_00021"/>
    </source>
</evidence>
<keyword id="KW-0067">ATP-binding</keyword>
<keyword id="KW-0963">Cytoplasm</keyword>
<keyword id="KW-1015">Disulfide bond</keyword>
<keyword id="KW-0547">Nucleotide-binding</keyword>
<keyword id="KW-0676">Redox-active center</keyword>
<keyword id="KW-1185">Reference proteome</keyword>
<keyword id="KW-0694">RNA-binding</keyword>
<keyword id="KW-0784">Thiamine biosynthesis</keyword>
<keyword id="KW-0808">Transferase</keyword>
<keyword id="KW-0820">tRNA-binding</keyword>
<name>THII_SHISS</name>
<comment type="function">
    <text evidence="1">Catalyzes the ATP-dependent transfer of a sulfur to tRNA to produce 4-thiouridine in position 8 of tRNAs, which functions as a near-UV photosensor. Also catalyzes the transfer of sulfur to the sulfur carrier protein ThiS, forming ThiS-thiocarboxylate. This is a step in the synthesis of thiazole, in the thiamine biosynthesis pathway. The sulfur is donated as persulfide by IscS.</text>
</comment>
<comment type="catalytic activity">
    <reaction evidence="1">
        <text>[ThiI sulfur-carrier protein]-S-sulfanyl-L-cysteine + a uridine in tRNA + 2 reduced [2Fe-2S]-[ferredoxin] + ATP + H(+) = [ThiI sulfur-carrier protein]-L-cysteine + a 4-thiouridine in tRNA + 2 oxidized [2Fe-2S]-[ferredoxin] + AMP + diphosphate</text>
        <dbReference type="Rhea" id="RHEA:24176"/>
        <dbReference type="Rhea" id="RHEA-COMP:10000"/>
        <dbReference type="Rhea" id="RHEA-COMP:10001"/>
        <dbReference type="Rhea" id="RHEA-COMP:13337"/>
        <dbReference type="Rhea" id="RHEA-COMP:13338"/>
        <dbReference type="Rhea" id="RHEA-COMP:13339"/>
        <dbReference type="Rhea" id="RHEA-COMP:13340"/>
        <dbReference type="ChEBI" id="CHEBI:15378"/>
        <dbReference type="ChEBI" id="CHEBI:29950"/>
        <dbReference type="ChEBI" id="CHEBI:30616"/>
        <dbReference type="ChEBI" id="CHEBI:33019"/>
        <dbReference type="ChEBI" id="CHEBI:33737"/>
        <dbReference type="ChEBI" id="CHEBI:33738"/>
        <dbReference type="ChEBI" id="CHEBI:61963"/>
        <dbReference type="ChEBI" id="CHEBI:65315"/>
        <dbReference type="ChEBI" id="CHEBI:136798"/>
        <dbReference type="ChEBI" id="CHEBI:456215"/>
        <dbReference type="EC" id="2.8.1.4"/>
    </reaction>
</comment>
<comment type="catalytic activity">
    <reaction evidence="1">
        <text>[ThiS sulfur-carrier protein]-C-terminal Gly-Gly-AMP + S-sulfanyl-L-cysteinyl-[cysteine desulfurase] + AH2 = [ThiS sulfur-carrier protein]-C-terminal-Gly-aminoethanethioate + L-cysteinyl-[cysteine desulfurase] + A + AMP + 2 H(+)</text>
        <dbReference type="Rhea" id="RHEA:43340"/>
        <dbReference type="Rhea" id="RHEA-COMP:12157"/>
        <dbReference type="Rhea" id="RHEA-COMP:12158"/>
        <dbReference type="Rhea" id="RHEA-COMP:12910"/>
        <dbReference type="Rhea" id="RHEA-COMP:19908"/>
        <dbReference type="ChEBI" id="CHEBI:13193"/>
        <dbReference type="ChEBI" id="CHEBI:15378"/>
        <dbReference type="ChEBI" id="CHEBI:17499"/>
        <dbReference type="ChEBI" id="CHEBI:29950"/>
        <dbReference type="ChEBI" id="CHEBI:61963"/>
        <dbReference type="ChEBI" id="CHEBI:90618"/>
        <dbReference type="ChEBI" id="CHEBI:232372"/>
        <dbReference type="ChEBI" id="CHEBI:456215"/>
    </reaction>
</comment>
<comment type="pathway">
    <text evidence="1">Cofactor biosynthesis; thiamine diphosphate biosynthesis.</text>
</comment>
<comment type="subcellular location">
    <subcellularLocation>
        <location evidence="1">Cytoplasm</location>
    </subcellularLocation>
</comment>
<comment type="similarity">
    <text evidence="1">Belongs to the ThiI family.</text>
</comment>
<reference key="1">
    <citation type="journal article" date="2005" name="Nucleic Acids Res.">
        <title>Genome dynamics and diversity of Shigella species, the etiologic agents of bacillary dysentery.</title>
        <authorList>
            <person name="Yang F."/>
            <person name="Yang J."/>
            <person name="Zhang X."/>
            <person name="Chen L."/>
            <person name="Jiang Y."/>
            <person name="Yan Y."/>
            <person name="Tang X."/>
            <person name="Wang J."/>
            <person name="Xiong Z."/>
            <person name="Dong J."/>
            <person name="Xue Y."/>
            <person name="Zhu Y."/>
            <person name="Xu X."/>
            <person name="Sun L."/>
            <person name="Chen S."/>
            <person name="Nie H."/>
            <person name="Peng J."/>
            <person name="Xu J."/>
            <person name="Wang Y."/>
            <person name="Yuan Z."/>
            <person name="Wen Y."/>
            <person name="Yao Z."/>
            <person name="Shen Y."/>
            <person name="Qiang B."/>
            <person name="Hou Y."/>
            <person name="Yu J."/>
            <person name="Jin Q."/>
        </authorList>
    </citation>
    <scope>NUCLEOTIDE SEQUENCE [LARGE SCALE GENOMIC DNA]</scope>
    <source>
        <strain>Ss046</strain>
    </source>
</reference>
<gene>
    <name evidence="1" type="primary">thiI</name>
    <name type="ordered locus">SSON_0400</name>
</gene>